<accession>Q02322</accession>
<name>UVRD_HAEIN</name>
<reference key="1">
    <citation type="journal article" date="1993" name="Gene">
        <title>The sequence of the Haemophilus influenzae mutB gene indicates it encodes a DNA helicase II-like protein.</title>
        <authorList>
            <person name="Walter R.B."/>
            <person name="Morton K.A."/>
            <person name="Stuy J.H."/>
        </authorList>
    </citation>
    <scope>NUCLEOTIDE SEQUENCE [GENOMIC DNA]</scope>
    <source>
        <strain>Rd / BC200</strain>
    </source>
</reference>
<reference key="2">
    <citation type="journal article" date="1995" name="Science">
        <title>Whole-genome random sequencing and assembly of Haemophilus influenzae Rd.</title>
        <authorList>
            <person name="Fleischmann R.D."/>
            <person name="Adams M.D."/>
            <person name="White O."/>
            <person name="Clayton R.A."/>
            <person name="Kirkness E.F."/>
            <person name="Kerlavage A.R."/>
            <person name="Bult C.J."/>
            <person name="Tomb J.-F."/>
            <person name="Dougherty B.A."/>
            <person name="Merrick J.M."/>
            <person name="McKenney K."/>
            <person name="Sutton G.G."/>
            <person name="FitzHugh W."/>
            <person name="Fields C.A."/>
            <person name="Gocayne J.D."/>
            <person name="Scott J.D."/>
            <person name="Shirley R."/>
            <person name="Liu L.-I."/>
            <person name="Glodek A."/>
            <person name="Kelley J.M."/>
            <person name="Weidman J.F."/>
            <person name="Phillips C.A."/>
            <person name="Spriggs T."/>
            <person name="Hedblom E."/>
            <person name="Cotton M.D."/>
            <person name="Utterback T.R."/>
            <person name="Hanna M.C."/>
            <person name="Nguyen D.T."/>
            <person name="Saudek D.M."/>
            <person name="Brandon R.C."/>
            <person name="Fine L.D."/>
            <person name="Fritchman J.L."/>
            <person name="Fuhrmann J.L."/>
            <person name="Geoghagen N.S.M."/>
            <person name="Gnehm C.L."/>
            <person name="McDonald L.A."/>
            <person name="Small K.V."/>
            <person name="Fraser C.M."/>
            <person name="Smith H.O."/>
            <person name="Venter J.C."/>
        </authorList>
    </citation>
    <scope>NUCLEOTIDE SEQUENCE [LARGE SCALE GENOMIC DNA]</scope>
    <source>
        <strain>ATCC 51907 / DSM 11121 / KW20 / Rd</strain>
    </source>
</reference>
<reference key="3">
    <citation type="journal article" date="1988" name="J. Bacteriol.">
        <title>Isolation and characterization of a UV-sensitive mutator (mutB1) mutant of Haemophilus influenzae.</title>
        <authorList>
            <person name="Walter R.B."/>
            <person name="Stuy J.H."/>
        </authorList>
    </citation>
    <scope>CHARACTERIZATION OF MUTANT MUTB1</scope>
    <source>
        <strain>Rd / BC200</strain>
    </source>
</reference>
<reference key="4">
    <citation type="journal article" date="2014" name="J. Biol. Chem.">
        <title>Mycobacterium tuberculosis DinG is a structure-specific helicase that unwinds G4 DNA: implications for targeting G4 DNA as a novel therapeutic approach.</title>
        <authorList>
            <person name="Thakur R.S."/>
            <person name="Desingu A."/>
            <person name="Basavaraju S."/>
            <person name="Subramanya S."/>
            <person name="Rao D.N."/>
            <person name="Nagaraju G."/>
        </authorList>
    </citation>
    <scope>FUNCTION AS A 3'-5' HELICASE</scope>
    <scope>TRANSLOCATION DIRECTION</scope>
</reference>
<feature type="chain" id="PRO_0000102074" description="DNA helicase II">
    <location>
        <begin position="1"/>
        <end position="727"/>
    </location>
</feature>
<feature type="domain" description="UvrD-like helicase ATP-binding" evidence="2">
    <location>
        <begin position="9"/>
        <end position="290"/>
    </location>
</feature>
<feature type="domain" description="UvrD-like helicase C-terminal" evidence="3">
    <location>
        <begin position="291"/>
        <end position="568"/>
    </location>
</feature>
<feature type="binding site" evidence="2">
    <location>
        <begin position="33"/>
        <end position="38"/>
    </location>
    <ligand>
        <name>ATP</name>
        <dbReference type="ChEBI" id="CHEBI:30616"/>
    </ligand>
</feature>
<feature type="binding site" evidence="1">
    <location>
        <position position="288"/>
    </location>
    <ligand>
        <name>ATP</name>
        <dbReference type="ChEBI" id="CHEBI:30616"/>
    </ligand>
</feature>
<feature type="sequence conflict" description="In Ref. 1; AAC36867." evidence="8" ref="1">
    <original>R</original>
    <variation>A</variation>
    <location>
        <position position="18"/>
    </location>
</feature>
<feature type="sequence conflict" description="In Ref. 1; AAC36867." evidence="8" ref="1">
    <original>H</original>
    <variation>R</variation>
    <location>
        <position position="100"/>
    </location>
</feature>
<feature type="sequence conflict" description="In Ref. 1; AAC36867." evidence="8" ref="1">
    <original>ILA</original>
    <variation>FLP</variation>
    <location>
        <begin position="240"/>
        <end position="242"/>
    </location>
</feature>
<feature type="sequence conflict" description="In Ref. 1; AAC36867." evidence="8" ref="1">
    <original>RQEIKDALAYLR</original>
    <variation>LKKLKMRYAIFV</variation>
    <location>
        <begin position="389"/>
        <end position="400"/>
    </location>
</feature>
<feature type="sequence conflict" description="In Ref. 1; AAC36867." evidence="8" ref="1">
    <original>ST</original>
    <variation>QQ</variation>
    <location>
        <begin position="459"/>
        <end position="460"/>
    </location>
</feature>
<feature type="sequence conflict" description="In Ref. 1; AAC36867." evidence="8" ref="1">
    <original>AELPRE</original>
    <variation>GRITER</variation>
    <location>
        <begin position="638"/>
        <end position="643"/>
    </location>
</feature>
<gene>
    <name type="primary">uvrD</name>
    <name evidence="6" type="synonym">mutB</name>
    <name type="ordered locus">HI_1188</name>
</gene>
<comment type="function">
    <text evidence="4 5">A 3'-5' DNA helicase, probably has DNA-dependent ATPase activity (PubMed:25059658). Translocates on ssDNA with 3'-5' polarity (PubMed:25059658). A mutB1 mutation is UV sensitive and subject to spontaneous hypermutability upon UV irradiation (PubMed:3259573). May process damage occurring in non-replicating regions of DNA to produce recombinational intermediates for sister strand recombinational exchange.</text>
</comment>
<comment type="catalytic activity">
    <reaction evidence="4">
        <text>Couples ATP hydrolysis with the unwinding of duplex DNA by translocating in the 3'-5' direction.</text>
        <dbReference type="EC" id="5.6.2.4"/>
    </reaction>
</comment>
<comment type="catalytic activity">
    <reaction evidence="9">
        <text>ATP + H2O = ADP + phosphate + H(+)</text>
        <dbReference type="Rhea" id="RHEA:13065"/>
        <dbReference type="ChEBI" id="CHEBI:15377"/>
        <dbReference type="ChEBI" id="CHEBI:15378"/>
        <dbReference type="ChEBI" id="CHEBI:30616"/>
        <dbReference type="ChEBI" id="CHEBI:43474"/>
        <dbReference type="ChEBI" id="CHEBI:456216"/>
        <dbReference type="EC" id="5.6.2.4"/>
    </reaction>
</comment>
<comment type="interaction">
    <interactant intactId="EBI-7817147">
        <id>Q02322</id>
    </interactant>
    <interactant intactId="EBI-7817147">
        <id>Q02322</id>
        <label>uvrD</label>
    </interactant>
    <organismsDiffer>false</organismsDiffer>
    <experiments>2</experiments>
</comment>
<comment type="similarity">
    <text evidence="8">Belongs to the helicase family. UvrD subfamily.</text>
</comment>
<comment type="caution">
    <text evidence="8">It is uncertain whether Met-1 or Met-2 is the initiator.</text>
</comment>
<protein>
    <recommendedName>
        <fullName evidence="7">DNA helicase II</fullName>
        <ecNumber evidence="4">5.6.2.4</ecNumber>
    </recommendedName>
    <alternativeName>
        <fullName evidence="8">DNA 3'-5' helicase II</fullName>
    </alternativeName>
</protein>
<evidence type="ECO:0000250" key="1"/>
<evidence type="ECO:0000255" key="2">
    <source>
        <dbReference type="PROSITE-ProRule" id="PRU00560"/>
    </source>
</evidence>
<evidence type="ECO:0000255" key="3">
    <source>
        <dbReference type="PROSITE-ProRule" id="PRU00617"/>
    </source>
</evidence>
<evidence type="ECO:0000269" key="4">
    <source>
    </source>
</evidence>
<evidence type="ECO:0000269" key="5">
    <source>
    </source>
</evidence>
<evidence type="ECO:0000303" key="6">
    <source>
    </source>
</evidence>
<evidence type="ECO:0000303" key="7">
    <source>
    </source>
</evidence>
<evidence type="ECO:0000305" key="8"/>
<evidence type="ECO:0000305" key="9">
    <source>
    </source>
</evidence>
<sequence>MMDISELLDGLNDKQRERVAAPLGNHLVLAGAGSGKTRVLTHRIAWLIAVENISEGSIMAVTFTNKAAAEMRHRIQSTLAKHAQHQLFGMWIGTFHSIAHRLLRAHHLDVGLPQDFQILDSEDQLRLIKRLLKLHNFDEKAFPPKQACWYINNKKDEGLRPNDIEDFNDRQEREWIKIYQIYQDTCDRAGLVDFAELLIRVYELFEKKPLILQRYQQRFQHILVDEFQDTNKIQYKWIKILAGKTGQVMIVGDDDQSIYGWRGAQIENIQKFLKDFKAETIRLEQNYRSTANILNSANELIANNSDRLGKNLWTEGEKGDPVGIYSAFNELDEAKFVASQIQDWVEHGGKLDDCAVLYRSNSQSRVIEEALIRCQIPYRIYGGMRFFERQEIKDALAYLRLINNRQDDAAFERVINTPTRGIGDRTLDILRNLTRERQITLWQAVQVATQENMLAGRASTALLRFQELINSLQLDTAEMPLFAQTDFVIKHSGLYEMYQQEKGEKGEVRIENLEELVTATREFIKPDNAEEMTELTAFLTHASLEAGEEQASPHQSCVEMMTLHSAKGLEFPRVFMVGVEEGLFPSFRSFEEPGRLEEERRLAYVGITRAKKKLTISYAESRRLYAKEERHLPSRFIAELPRECIQEIRLRGTVTRAMNLAKVGSLSNTSAVENEWKMGQKVKHEKFGFGTVINVEGSENNTRLQIAFQAQGIKWLIAHLAKLEKVR</sequence>
<keyword id="KW-0067">ATP-binding</keyword>
<keyword id="KW-0227">DNA damage</keyword>
<keyword id="KW-0234">DNA repair</keyword>
<keyword id="KW-0235">DNA replication</keyword>
<keyword id="KW-0238">DNA-binding</keyword>
<keyword id="KW-0347">Helicase</keyword>
<keyword id="KW-0378">Hydrolase</keyword>
<keyword id="KW-0413">Isomerase</keyword>
<keyword id="KW-0547">Nucleotide-binding</keyword>
<keyword id="KW-1185">Reference proteome</keyword>
<dbReference type="EC" id="5.6.2.4" evidence="4"/>
<dbReference type="EMBL" id="M99049">
    <property type="protein sequence ID" value="AAC36867.1"/>
    <property type="molecule type" value="Unassigned_DNA"/>
</dbReference>
<dbReference type="EMBL" id="L42023">
    <property type="protein sequence ID" value="AAC22841.1"/>
    <property type="molecule type" value="Genomic_DNA"/>
</dbReference>
<dbReference type="PIR" id="H64188">
    <property type="entry name" value="H64188"/>
</dbReference>
<dbReference type="RefSeq" id="NP_439344.1">
    <property type="nucleotide sequence ID" value="NC_000907.1"/>
</dbReference>
<dbReference type="SMR" id="Q02322"/>
<dbReference type="MINT" id="Q02322"/>
<dbReference type="STRING" id="71421.HI_1188"/>
<dbReference type="EnsemblBacteria" id="AAC22841">
    <property type="protein sequence ID" value="AAC22841"/>
    <property type="gene ID" value="HI_1188"/>
</dbReference>
<dbReference type="KEGG" id="hin:HI_1188"/>
<dbReference type="PATRIC" id="fig|71421.8.peg.1240"/>
<dbReference type="eggNOG" id="COG0210">
    <property type="taxonomic scope" value="Bacteria"/>
</dbReference>
<dbReference type="HOGENOM" id="CLU_004585_5_2_6"/>
<dbReference type="OrthoDB" id="9806690at2"/>
<dbReference type="PhylomeDB" id="Q02322"/>
<dbReference type="BioCyc" id="HINF71421:G1GJ1-1219-MONOMER"/>
<dbReference type="Proteomes" id="UP000000579">
    <property type="component" value="Chromosome"/>
</dbReference>
<dbReference type="GO" id="GO:0005829">
    <property type="term" value="C:cytosol"/>
    <property type="evidence" value="ECO:0000318"/>
    <property type="project" value="GO_Central"/>
</dbReference>
<dbReference type="GO" id="GO:0033202">
    <property type="term" value="C:DNA helicase complex"/>
    <property type="evidence" value="ECO:0000318"/>
    <property type="project" value="GO_Central"/>
</dbReference>
<dbReference type="GO" id="GO:0043138">
    <property type="term" value="F:3'-5' DNA helicase activity"/>
    <property type="evidence" value="ECO:0000314"/>
    <property type="project" value="UniProtKB"/>
</dbReference>
<dbReference type="GO" id="GO:0005524">
    <property type="term" value="F:ATP binding"/>
    <property type="evidence" value="ECO:0007669"/>
    <property type="project" value="UniProtKB-KW"/>
</dbReference>
<dbReference type="GO" id="GO:0016887">
    <property type="term" value="F:ATP hydrolysis activity"/>
    <property type="evidence" value="ECO:0007669"/>
    <property type="project" value="RHEA"/>
</dbReference>
<dbReference type="GO" id="GO:0003677">
    <property type="term" value="F:DNA binding"/>
    <property type="evidence" value="ECO:0007669"/>
    <property type="project" value="UniProtKB-KW"/>
</dbReference>
<dbReference type="GO" id="GO:0042802">
    <property type="term" value="F:identical protein binding"/>
    <property type="evidence" value="ECO:0000353"/>
    <property type="project" value="IntAct"/>
</dbReference>
<dbReference type="GO" id="GO:0006260">
    <property type="term" value="P:DNA replication"/>
    <property type="evidence" value="ECO:0007669"/>
    <property type="project" value="UniProtKB-KW"/>
</dbReference>
<dbReference type="GO" id="GO:0000725">
    <property type="term" value="P:recombinational repair"/>
    <property type="evidence" value="ECO:0000318"/>
    <property type="project" value="GO_Central"/>
</dbReference>
<dbReference type="CDD" id="cd17932">
    <property type="entry name" value="DEXQc_UvrD"/>
    <property type="match status" value="1"/>
</dbReference>
<dbReference type="CDD" id="cd18807">
    <property type="entry name" value="SF1_C_UvrD"/>
    <property type="match status" value="1"/>
</dbReference>
<dbReference type="FunFam" id="3.40.50.300:FF:001201">
    <property type="entry name" value="ATP-dependent DNA helicase UvrD2"/>
    <property type="match status" value="1"/>
</dbReference>
<dbReference type="FunFam" id="1.10.10.160:FF:000002">
    <property type="entry name" value="DNA helicase"/>
    <property type="match status" value="1"/>
</dbReference>
<dbReference type="FunFam" id="1.10.486.10:FF:000001">
    <property type="entry name" value="DNA helicase"/>
    <property type="match status" value="1"/>
</dbReference>
<dbReference type="Gene3D" id="1.10.10.160">
    <property type="match status" value="1"/>
</dbReference>
<dbReference type="Gene3D" id="3.40.50.300">
    <property type="entry name" value="P-loop containing nucleotide triphosphate hydrolases"/>
    <property type="match status" value="2"/>
</dbReference>
<dbReference type="Gene3D" id="1.10.486.10">
    <property type="entry name" value="PCRA, domain 4"/>
    <property type="match status" value="1"/>
</dbReference>
<dbReference type="InterPro" id="IPR013986">
    <property type="entry name" value="DExx_box_DNA_helicase_dom_sf"/>
</dbReference>
<dbReference type="InterPro" id="IPR005753">
    <property type="entry name" value="DNA_helicase_ATP-dep_UvrD"/>
</dbReference>
<dbReference type="InterPro" id="IPR014017">
    <property type="entry name" value="DNA_helicase_UvrD-like_C"/>
</dbReference>
<dbReference type="InterPro" id="IPR000212">
    <property type="entry name" value="DNA_helicase_UvrD/REP"/>
</dbReference>
<dbReference type="InterPro" id="IPR027417">
    <property type="entry name" value="P-loop_NTPase"/>
</dbReference>
<dbReference type="InterPro" id="IPR014016">
    <property type="entry name" value="UvrD-like_ATP-bd"/>
</dbReference>
<dbReference type="NCBIfam" id="NF008743">
    <property type="entry name" value="PRK11773.1"/>
    <property type="match status" value="1"/>
</dbReference>
<dbReference type="NCBIfam" id="TIGR01075">
    <property type="entry name" value="uvrD"/>
    <property type="match status" value="1"/>
</dbReference>
<dbReference type="PANTHER" id="PTHR11070:SF2">
    <property type="entry name" value="ATP-DEPENDENT DNA HELICASE SRS2"/>
    <property type="match status" value="1"/>
</dbReference>
<dbReference type="PANTHER" id="PTHR11070">
    <property type="entry name" value="UVRD / RECB / PCRA DNA HELICASE FAMILY MEMBER"/>
    <property type="match status" value="1"/>
</dbReference>
<dbReference type="Pfam" id="PF21196">
    <property type="entry name" value="PcrA_UvrD_tudor"/>
    <property type="match status" value="1"/>
</dbReference>
<dbReference type="Pfam" id="PF00580">
    <property type="entry name" value="UvrD-helicase"/>
    <property type="match status" value="1"/>
</dbReference>
<dbReference type="Pfam" id="PF13361">
    <property type="entry name" value="UvrD_C"/>
    <property type="match status" value="1"/>
</dbReference>
<dbReference type="SUPFAM" id="SSF52540">
    <property type="entry name" value="P-loop containing nucleoside triphosphate hydrolases"/>
    <property type="match status" value="1"/>
</dbReference>
<dbReference type="PROSITE" id="PS51198">
    <property type="entry name" value="UVRD_HELICASE_ATP_BIND"/>
    <property type="match status" value="1"/>
</dbReference>
<dbReference type="PROSITE" id="PS51217">
    <property type="entry name" value="UVRD_HELICASE_CTER"/>
    <property type="match status" value="1"/>
</dbReference>
<proteinExistence type="evidence at protein level"/>
<organism>
    <name type="scientific">Haemophilus influenzae (strain ATCC 51907 / DSM 11121 / KW20 / Rd)</name>
    <dbReference type="NCBI Taxonomy" id="71421"/>
    <lineage>
        <taxon>Bacteria</taxon>
        <taxon>Pseudomonadati</taxon>
        <taxon>Pseudomonadota</taxon>
        <taxon>Gammaproteobacteria</taxon>
        <taxon>Pasteurellales</taxon>
        <taxon>Pasteurellaceae</taxon>
        <taxon>Haemophilus</taxon>
    </lineage>
</organism>